<protein>
    <recommendedName>
        <fullName>Fibrinogen gamma chain</fullName>
    </recommendedName>
</protein>
<accession>Q8VCM7</accession>
<accession>Q8WUR3</accession>
<accession>Q91ZP0</accession>
<gene>
    <name type="primary">Fgg</name>
</gene>
<comment type="function">
    <text evidence="2 8">Together with fibrinogen alpha (FGA) and fibrinogen beta (FGB), polymerizes to form an insoluble fibrin matrix (By similarity). Fibrin has a major function in hemostasis as one of the primary components of blood clots (By similarity). In addition, functions during the early stages of wound repair to stabilize the lesion and guide cell migration during re-epithelialization (By similarity). Was originally thought to be essential for platelet aggregation, based on in vitro studies using anticoagulated blood. However, subsequent studies have shown that it is not absolutely required for thrombus formation in vivo (By similarity). Enhances expression of SELP in activated platelets via an ITGB3-dependent pathway (PubMed:19332769). Maternal fibrinogen is essential for successful pregnancy (By similarity). Fibrin deposition is also associated with infection, where it protects against IFNG-mediated hemorrhage (By similarity). May also facilitate the immune response via both innate and T-cell mediated pathways (By similarity).</text>
</comment>
<comment type="subunit">
    <text evidence="3">Heterohexamer; disulfide linked. Contains 2 sets of 3 non-identical chains (alpha, beta and gamma). The 2 heterotrimers are in head to head conformation with the N-termini in a small central domain (By similarity).</text>
</comment>
<comment type="subcellular location">
    <subcellularLocation>
        <location evidence="3">Secreted</location>
    </subcellularLocation>
</comment>
<comment type="domain">
    <text evidence="3">A long coiled coil structure formed by 3 polypeptide chains connects the central nodule to the C-terminal domains (distal nodules). The long C-terminal ends of the alpha chains fold back, contributing a fourth strand to the coiled coil structure.</text>
</comment>
<comment type="PTM">
    <text evidence="1">Conversion of fibrinogen to fibrin is triggered by thrombin, which cleaves fibrinopeptides A and B from alpha and beta chains, and thus exposes the N-terminal polymerization sites responsible for the formation of the soft clot. The soft clot is converted into the hard clot by factor XIIIA which catalyzes the epsilon-(gamma-glutamyl)lysine cross-linking between gamma chains (stronger) and between alpha chains (weaker) of different monomers (By similarity).</text>
</comment>
<organism>
    <name type="scientific">Mus musculus</name>
    <name type="common">Mouse</name>
    <dbReference type="NCBI Taxonomy" id="10090"/>
    <lineage>
        <taxon>Eukaryota</taxon>
        <taxon>Metazoa</taxon>
        <taxon>Chordata</taxon>
        <taxon>Craniata</taxon>
        <taxon>Vertebrata</taxon>
        <taxon>Euteleostomi</taxon>
        <taxon>Mammalia</taxon>
        <taxon>Eutheria</taxon>
        <taxon>Euarchontoglires</taxon>
        <taxon>Glires</taxon>
        <taxon>Rodentia</taxon>
        <taxon>Myomorpha</taxon>
        <taxon>Muroidea</taxon>
        <taxon>Muridae</taxon>
        <taxon>Murinae</taxon>
        <taxon>Mus</taxon>
        <taxon>Mus</taxon>
    </lineage>
</organism>
<feature type="signal peptide" evidence="1">
    <location>
        <begin position="1"/>
        <end position="25"/>
    </location>
</feature>
<feature type="chain" id="PRO_0000009100" description="Fibrinogen gamma chain">
    <location>
        <begin position="26"/>
        <end position="436"/>
    </location>
</feature>
<feature type="domain" description="Fibrinogen C-terminal" evidence="7">
    <location>
        <begin position="169"/>
        <end position="415"/>
    </location>
</feature>
<feature type="binding site" evidence="5">
    <location>
        <position position="343"/>
    </location>
    <ligand>
        <name>Ca(2+)</name>
        <dbReference type="ChEBI" id="CHEBI:29108"/>
    </ligand>
</feature>
<feature type="binding site" evidence="5">
    <location>
        <position position="345"/>
    </location>
    <ligand>
        <name>Ca(2+)</name>
        <dbReference type="ChEBI" id="CHEBI:29108"/>
    </ligand>
</feature>
<feature type="binding site" evidence="5">
    <location>
        <position position="349"/>
    </location>
    <ligand>
        <name>Ca(2+)</name>
        <dbReference type="ChEBI" id="CHEBI:29108"/>
    </ligand>
</feature>
<feature type="modified residue" description="Phosphoserine" evidence="4">
    <location>
        <position position="430"/>
    </location>
</feature>
<feature type="glycosylation site" description="N-linked (GlcNAc...) asparagine" evidence="6">
    <location>
        <position position="77"/>
    </location>
</feature>
<feature type="disulfide bond" description="Interchain (with gamma chain)" evidence="7">
    <location>
        <position position="33"/>
    </location>
</feature>
<feature type="disulfide bond" description="Interchain (with gamma chain)" evidence="7">
    <location>
        <position position="34"/>
    </location>
</feature>
<feature type="disulfide bond" description="Interchain (with beta chain)" evidence="7">
    <location>
        <position position="44"/>
    </location>
</feature>
<feature type="disulfide bond" description="Interchain (with alpha chain)" evidence="7">
    <location>
        <position position="48"/>
    </location>
</feature>
<feature type="disulfide bond" description="Interchain (with beta chain)" evidence="7">
    <location>
        <position position="160"/>
    </location>
</feature>
<feature type="disulfide bond" description="Interchain (with gamma chain)" evidence="7">
    <location>
        <position position="164"/>
    </location>
</feature>
<feature type="disulfide bond" evidence="7">
    <location>
        <begin position="178"/>
        <end position="207"/>
    </location>
</feature>
<feature type="disulfide bond" evidence="7">
    <location>
        <begin position="351"/>
        <end position="364"/>
    </location>
</feature>
<feature type="cross-link" description="Isoglutamyl lysine isopeptide (Gln-Lys) (interchain with K-431)" evidence="1">
    <location>
        <position position="423"/>
    </location>
</feature>
<feature type="cross-link" description="Isoglutamyl lysine isopeptide (Lys-Gln) (interchain with Q-423)" evidence="1">
    <location>
        <position position="431"/>
    </location>
</feature>
<feature type="mutagenesis site" description="Impairs induction of SELP in activated platelets." evidence="8">
    <location>
        <begin position="432"/>
        <end position="436"/>
    </location>
</feature>
<keyword id="KW-1064">Adaptive immunity</keyword>
<keyword id="KW-0094">Blood coagulation</keyword>
<keyword id="KW-0106">Calcium</keyword>
<keyword id="KW-0175">Coiled coil</keyword>
<keyword id="KW-1015">Disulfide bond</keyword>
<keyword id="KW-0325">Glycoprotein</keyword>
<keyword id="KW-0356">Hemostasis</keyword>
<keyword id="KW-0391">Immunity</keyword>
<keyword id="KW-0399">Innate immunity</keyword>
<keyword id="KW-1017">Isopeptide bond</keyword>
<keyword id="KW-0479">Metal-binding</keyword>
<keyword id="KW-0597">Phosphoprotein</keyword>
<keyword id="KW-1185">Reference proteome</keyword>
<keyword id="KW-0964">Secreted</keyword>
<keyword id="KW-0732">Signal</keyword>
<proteinExistence type="evidence at protein level"/>
<name>FIBG_MOUSE</name>
<evidence type="ECO:0000250" key="1"/>
<evidence type="ECO:0000250" key="2">
    <source>
        <dbReference type="UniProtKB" id="E9PV24"/>
    </source>
</evidence>
<evidence type="ECO:0000250" key="3">
    <source>
        <dbReference type="UniProtKB" id="P02679"/>
    </source>
</evidence>
<evidence type="ECO:0000250" key="4">
    <source>
        <dbReference type="UniProtKB" id="P02680"/>
    </source>
</evidence>
<evidence type="ECO:0000250" key="5">
    <source>
        <dbReference type="UniProtKB" id="P04115"/>
    </source>
</evidence>
<evidence type="ECO:0000255" key="6"/>
<evidence type="ECO:0000255" key="7">
    <source>
        <dbReference type="PROSITE-ProRule" id="PRU00739"/>
    </source>
</evidence>
<evidence type="ECO:0000269" key="8">
    <source>
    </source>
</evidence>
<sequence length="436" mass="49391">MSWSLQPPSFLLCCLLLLFSPTGLAYVATRDNCCILDERFGSFCPTTCGIADFLSSYQTDVDNDLRTLEDILFRAENRTTEAKELIKAIQVYYNPDQPPKPGMIDSATQKSKKMVEEIVKYEALLLTHETSIRYLQEIYNSNNQKITNLKQKVAQLEAQCQEPCKDSVQIHDTTGKDCQEIANKGAKESGLYFIRPLKAKQQFLVYCEIDGSGNGWTVLQKRIDGSLDFKKNWIQYKEGFGHLSPTGTTEFWLGNEKIHLISMQSTIPYALRIQLKDWNGRTSTADYAMFRVGPESDKYRLTYAYFIGGDAGDAFDGYDFGDDPSDKFFTSHNGMQFSTWDNDNDKFEGNCAEQDGSGWWMNKCHAGHLNGVYHQGGTYSKSSTTNGFDDGIIWATWKSRWYSMKETTMKIIPFNRLSIGEGQQHHMGGSKQAGDV</sequence>
<reference key="1">
    <citation type="journal article" date="2004" name="Genome Res.">
        <title>The status, quality, and expansion of the NIH full-length cDNA project: the Mammalian Gene Collection (MGC).</title>
        <authorList>
            <consortium name="The MGC Project Team"/>
        </authorList>
    </citation>
    <scope>NUCLEOTIDE SEQUENCE [LARGE SCALE MRNA]</scope>
    <source>
        <strain>FVB/N</strain>
        <tissue>Liver</tissue>
        <tissue>Salivary gland</tissue>
    </source>
</reference>
<reference key="2">
    <citation type="submission" date="2001-08" db="EMBL/GenBank/DDBJ databases">
        <title>Mouse fibrinogen gamma-chain.</title>
        <authorList>
            <person name="Murakawa M."/>
            <person name="Freeman M.W."/>
        </authorList>
    </citation>
    <scope>NUCLEOTIDE SEQUENCE [MRNA] OF 170-352</scope>
</reference>
<reference key="3">
    <citation type="journal article" date="2009" name="Blood">
        <title>Fibrinogen is required for maintenance of platelet intracellular and cell-surface P-selectin expression.</title>
        <authorList>
            <person name="Yang H."/>
            <person name="Lang S."/>
            <person name="Zhai Z."/>
            <person name="Li L."/>
            <person name="Kahr W.H."/>
            <person name="Chen P."/>
            <person name="Brkic J."/>
            <person name="Spring C.M."/>
            <person name="Flick M.J."/>
            <person name="Degen J.L."/>
            <person name="Freedman J."/>
            <person name="Ni H."/>
        </authorList>
    </citation>
    <scope>FUNCTION</scope>
    <scope>MUTAGENESIS OF 432-GLN--VAL-436</scope>
</reference>
<reference key="4">
    <citation type="journal article" date="2010" name="Cell">
        <title>A tissue-specific atlas of mouse protein phosphorylation and expression.</title>
        <authorList>
            <person name="Huttlin E.L."/>
            <person name="Jedrychowski M.P."/>
            <person name="Elias J.E."/>
            <person name="Goswami T."/>
            <person name="Rad R."/>
            <person name="Beausoleil S.A."/>
            <person name="Villen J."/>
            <person name="Haas W."/>
            <person name="Sowa M.E."/>
            <person name="Gygi S.P."/>
        </authorList>
    </citation>
    <scope>IDENTIFICATION BY MASS SPECTROMETRY [LARGE SCALE ANALYSIS]</scope>
    <source>
        <tissue>Brain</tissue>
        <tissue>Brown adipose tissue</tissue>
        <tissue>Heart</tissue>
        <tissue>Kidney</tissue>
        <tissue>Liver</tissue>
        <tissue>Lung</tissue>
        <tissue>Pancreas</tissue>
        <tissue>Spleen</tissue>
        <tissue>Testis</tissue>
    </source>
</reference>
<dbReference type="EMBL" id="BC019506">
    <property type="protein sequence ID" value="AAH19506.1"/>
    <property type="molecule type" value="mRNA"/>
</dbReference>
<dbReference type="EMBL" id="BC019828">
    <property type="protein sequence ID" value="AAH19828.1"/>
    <property type="molecule type" value="mRNA"/>
</dbReference>
<dbReference type="EMBL" id="AF413206">
    <property type="protein sequence ID" value="AAL02226.1"/>
    <property type="molecule type" value="mRNA"/>
</dbReference>
<dbReference type="CCDS" id="CCDS38462.1"/>
<dbReference type="RefSeq" id="NP_598623.1">
    <property type="nucleotide sequence ID" value="NM_133862.2"/>
</dbReference>
<dbReference type="SMR" id="Q8VCM7"/>
<dbReference type="BioGRID" id="221284">
    <property type="interactions" value="13"/>
</dbReference>
<dbReference type="ComplexPortal" id="CPX-1916">
    <property type="entry name" value="Fibrinogen"/>
</dbReference>
<dbReference type="FunCoup" id="Q8VCM7">
    <property type="interactions" value="205"/>
</dbReference>
<dbReference type="IntAct" id="Q8VCM7">
    <property type="interactions" value="4"/>
</dbReference>
<dbReference type="STRING" id="10090.ENSMUSP00000141648"/>
<dbReference type="GlyCosmos" id="Q8VCM7">
    <property type="glycosylation" value="1 site, No reported glycans"/>
</dbReference>
<dbReference type="GlyGen" id="Q8VCM7">
    <property type="glycosylation" value="2 sites, 1 O-linked glycan (1 site)"/>
</dbReference>
<dbReference type="iPTMnet" id="Q8VCM7"/>
<dbReference type="PhosphoSitePlus" id="Q8VCM7"/>
<dbReference type="SwissPalm" id="Q8VCM7"/>
<dbReference type="REPRODUCTION-2DPAGE" id="Q8VCM7"/>
<dbReference type="CPTAC" id="non-CPTAC-3323"/>
<dbReference type="CPTAC" id="non-CPTAC-3431"/>
<dbReference type="jPOST" id="Q8VCM7"/>
<dbReference type="PaxDb" id="10090-ENSMUSP00000037018"/>
<dbReference type="ProteomicsDB" id="271696"/>
<dbReference type="ABCD" id="Q8VCM7">
    <property type="antibodies" value="1 sequenced antibody"/>
</dbReference>
<dbReference type="Antibodypedia" id="16774">
    <property type="antibodies" value="751 antibodies from 37 providers"/>
</dbReference>
<dbReference type="DNASU" id="99571"/>
<dbReference type="Ensembl" id="ENSMUST00000048486.13">
    <property type="protein sequence ID" value="ENSMUSP00000037018.8"/>
    <property type="gene ID" value="ENSMUSG00000033860.14"/>
</dbReference>
<dbReference type="GeneID" id="99571"/>
<dbReference type="KEGG" id="mmu:99571"/>
<dbReference type="UCSC" id="uc008ppe.1">
    <property type="organism name" value="mouse"/>
</dbReference>
<dbReference type="AGR" id="MGI:95526"/>
<dbReference type="CTD" id="2266"/>
<dbReference type="MGI" id="MGI:95526">
    <property type="gene designation" value="Fgg"/>
</dbReference>
<dbReference type="VEuPathDB" id="HostDB:ENSMUSG00000033860"/>
<dbReference type="eggNOG" id="KOG2579">
    <property type="taxonomic scope" value="Eukaryota"/>
</dbReference>
<dbReference type="GeneTree" id="ENSGT00940000158467"/>
<dbReference type="HOGENOM" id="CLU_038628_13_0_1"/>
<dbReference type="InParanoid" id="Q8VCM7"/>
<dbReference type="OMA" id="TYHNGMR"/>
<dbReference type="OrthoDB" id="10063010at2759"/>
<dbReference type="PhylomeDB" id="Q8VCM7"/>
<dbReference type="TreeFam" id="TF336658"/>
<dbReference type="Reactome" id="R-MMU-114608">
    <property type="pathway name" value="Platelet degranulation"/>
</dbReference>
<dbReference type="Reactome" id="R-MMU-140875">
    <property type="pathway name" value="Common Pathway of Fibrin Clot Formation"/>
</dbReference>
<dbReference type="Reactome" id="R-MMU-216083">
    <property type="pathway name" value="Integrin cell surface interactions"/>
</dbReference>
<dbReference type="Reactome" id="R-MMU-354192">
    <property type="pathway name" value="Integrin signaling"/>
</dbReference>
<dbReference type="Reactome" id="R-MMU-354194">
    <property type="pathway name" value="GRB2:SOS provides linkage to MAPK signaling for Integrins"/>
</dbReference>
<dbReference type="Reactome" id="R-MMU-372708">
    <property type="pathway name" value="p130Cas linkage to MAPK signaling for integrins"/>
</dbReference>
<dbReference type="Reactome" id="R-MMU-381426">
    <property type="pathway name" value="Regulation of Insulin-like Growth Factor (IGF) transport and uptake by Insulin-like Growth Factor Binding Proteins (IGFBPs)"/>
</dbReference>
<dbReference type="Reactome" id="R-MMU-5674135">
    <property type="pathway name" value="MAP2K and MAPK activation"/>
</dbReference>
<dbReference type="Reactome" id="R-MMU-5686938">
    <property type="pathway name" value="Regulation of TLR by endogenous ligand"/>
</dbReference>
<dbReference type="Reactome" id="R-MMU-8957275">
    <property type="pathway name" value="Post-translational protein phosphorylation"/>
</dbReference>
<dbReference type="BioGRID-ORCS" id="99571">
    <property type="hits" value="3 hits in 77 CRISPR screens"/>
</dbReference>
<dbReference type="PRO" id="PR:Q8VCM7"/>
<dbReference type="Proteomes" id="UP000000589">
    <property type="component" value="Chromosome 3"/>
</dbReference>
<dbReference type="RNAct" id="Q8VCM7">
    <property type="molecule type" value="protein"/>
</dbReference>
<dbReference type="Bgee" id="ENSMUSG00000033860">
    <property type="expression patterns" value="Expressed in left lobe of liver and 76 other cell types or tissues"/>
</dbReference>
<dbReference type="ExpressionAtlas" id="Q8VCM7">
    <property type="expression patterns" value="baseline and differential"/>
</dbReference>
<dbReference type="GO" id="GO:0005938">
    <property type="term" value="C:cell cortex"/>
    <property type="evidence" value="ECO:0000314"/>
    <property type="project" value="MGI"/>
</dbReference>
<dbReference type="GO" id="GO:0062023">
    <property type="term" value="C:collagen-containing extracellular matrix"/>
    <property type="evidence" value="ECO:0007005"/>
    <property type="project" value="BHF-UCL"/>
</dbReference>
<dbReference type="GO" id="GO:0005577">
    <property type="term" value="C:fibrinogen complex"/>
    <property type="evidence" value="ECO:0007669"/>
    <property type="project" value="InterPro"/>
</dbReference>
<dbReference type="GO" id="GO:0045202">
    <property type="term" value="C:synapse"/>
    <property type="evidence" value="ECO:0000314"/>
    <property type="project" value="SynGO"/>
</dbReference>
<dbReference type="GO" id="GO:0046872">
    <property type="term" value="F:metal ion binding"/>
    <property type="evidence" value="ECO:0007669"/>
    <property type="project" value="UniProtKB-KW"/>
</dbReference>
<dbReference type="GO" id="GO:0005102">
    <property type="term" value="F:signaling receptor binding"/>
    <property type="evidence" value="ECO:0007669"/>
    <property type="project" value="InterPro"/>
</dbReference>
<dbReference type="GO" id="GO:0002250">
    <property type="term" value="P:adaptive immune response"/>
    <property type="evidence" value="ECO:0007669"/>
    <property type="project" value="UniProtKB-KW"/>
</dbReference>
<dbReference type="GO" id="GO:0045087">
    <property type="term" value="P:innate immune response"/>
    <property type="evidence" value="ECO:0007669"/>
    <property type="project" value="UniProtKB-KW"/>
</dbReference>
<dbReference type="GO" id="GO:0030168">
    <property type="term" value="P:platelet activation"/>
    <property type="evidence" value="ECO:0007669"/>
    <property type="project" value="InterPro"/>
</dbReference>
<dbReference type="GO" id="GO:0051258">
    <property type="term" value="P:protein polymerization"/>
    <property type="evidence" value="ECO:0007669"/>
    <property type="project" value="InterPro"/>
</dbReference>
<dbReference type="CDD" id="cd00087">
    <property type="entry name" value="FReD"/>
    <property type="match status" value="1"/>
</dbReference>
<dbReference type="FunFam" id="1.20.5.50:FF:000005">
    <property type="entry name" value="Fibrinogen gamma chain"/>
    <property type="match status" value="1"/>
</dbReference>
<dbReference type="FunFam" id="3.90.215.10:FF:000002">
    <property type="entry name" value="Fibrinogen gamma chain"/>
    <property type="match status" value="1"/>
</dbReference>
<dbReference type="FunFam" id="4.10.530.10:FF:000002">
    <property type="entry name" value="Fibrinogen gamma chain"/>
    <property type="match status" value="1"/>
</dbReference>
<dbReference type="Gene3D" id="1.20.5.50">
    <property type="match status" value="2"/>
</dbReference>
<dbReference type="Gene3D" id="3.90.215.10">
    <property type="entry name" value="Gamma Fibrinogen, chain A, domain 1"/>
    <property type="match status" value="1"/>
</dbReference>
<dbReference type="Gene3D" id="4.10.530.10">
    <property type="entry name" value="Gamma-fibrinogen Carboxyl Terminal Fragment, domain 2"/>
    <property type="match status" value="1"/>
</dbReference>
<dbReference type="InterPro" id="IPR037579">
    <property type="entry name" value="FIB_ANG-like"/>
</dbReference>
<dbReference type="InterPro" id="IPR036056">
    <property type="entry name" value="Fibrinogen-like_C"/>
</dbReference>
<dbReference type="InterPro" id="IPR014716">
    <property type="entry name" value="Fibrinogen_a/b/g_C_1"/>
</dbReference>
<dbReference type="InterPro" id="IPR002181">
    <property type="entry name" value="Fibrinogen_a/b/g_C_dom"/>
</dbReference>
<dbReference type="InterPro" id="IPR012290">
    <property type="entry name" value="Fibrinogen_a/b/g_coil_dom"/>
</dbReference>
<dbReference type="InterPro" id="IPR020837">
    <property type="entry name" value="Fibrinogen_CS"/>
</dbReference>
<dbReference type="PANTHER" id="PTHR47221">
    <property type="entry name" value="FIBRINOGEN ALPHA CHAIN"/>
    <property type="match status" value="1"/>
</dbReference>
<dbReference type="PANTHER" id="PTHR47221:SF6">
    <property type="entry name" value="FIBRINOGEN ALPHA CHAIN"/>
    <property type="match status" value="1"/>
</dbReference>
<dbReference type="Pfam" id="PF08702">
    <property type="entry name" value="Fib_alpha"/>
    <property type="match status" value="1"/>
</dbReference>
<dbReference type="Pfam" id="PF00147">
    <property type="entry name" value="Fibrinogen_C"/>
    <property type="match status" value="1"/>
</dbReference>
<dbReference type="SMART" id="SM00186">
    <property type="entry name" value="FBG"/>
    <property type="match status" value="1"/>
</dbReference>
<dbReference type="SMART" id="SM01212">
    <property type="entry name" value="Fib_alpha"/>
    <property type="match status" value="1"/>
</dbReference>
<dbReference type="SUPFAM" id="SSF56496">
    <property type="entry name" value="Fibrinogen C-terminal domain-like"/>
    <property type="match status" value="1"/>
</dbReference>
<dbReference type="SUPFAM" id="SSF58010">
    <property type="entry name" value="Fibrinogen coiled-coil and central regions"/>
    <property type="match status" value="1"/>
</dbReference>
<dbReference type="PROSITE" id="PS00514">
    <property type="entry name" value="FIBRINOGEN_C_1"/>
    <property type="match status" value="1"/>
</dbReference>
<dbReference type="PROSITE" id="PS51406">
    <property type="entry name" value="FIBRINOGEN_C_2"/>
    <property type="match status" value="1"/>
</dbReference>